<sequence>MGQTVTTPLSLTLDHWKDVQCIASNQSVDVKRRRWVTFCSVEWPSFDVGWPLDGTFNLDIILQVKSKVTCPGPHGHPDQVPYIVTWEALVYHPPPWVKPFVSPKPFPLSTLPFSPPGPSAHPPSRSDLYTALIPSKPPKSRVLPPNGGPLIDLLTENLPNLPPLSKGPVKKRRPPPPRYSPPNPMESRVRGRRDPPAADSTSSQAFPLRMGGDGQLQYWPFSSSDLYNWKNNNPSFSEDPGKLTALIESVLTTHQPTWDDCQQLLGTLLTGEEKQRVLLEARKAVRGNDGRPTQLPNEVNSAFPLERPDWNYSTPEGRNHLVLYRQLLLAGLHNAGRSPTNLAKVKRITQGPNESPSAFLERLKEAYRRYTPYDPEDPGQETNVSMSFIWQSAPDIGRKLERLEDLKSKTLGDLVREAEKIFNKRETPEEREERIRRETEEKEERRRAEDEQREKERDRRRHREMSKFLATVVTGQRQDRQGGERRRPQLDEDQCAYCKEKGHWAKDCPKKPRGPRGPRPQTSLLTLGD</sequence>
<feature type="initiator methionine" description="Removed; by host" evidence="1">
    <location>
        <position position="1"/>
    </location>
</feature>
<feature type="chain" id="PRO_0000390810" description="Gag polyprotein" evidence="1">
    <location>
        <begin position="2"/>
        <end position="529"/>
    </location>
</feature>
<feature type="chain" id="PRO_0000040892" description="Matrix protein p15" evidence="4">
    <location>
        <begin position="2"/>
        <end position="129"/>
    </location>
</feature>
<feature type="chain" id="PRO_0000040893" description="RNA-binding phosphoprotein p12" evidence="4">
    <location>
        <begin position="130"/>
        <end position="206"/>
    </location>
</feature>
<feature type="chain" id="PRO_0000040894" description="Capsid protein p30" evidence="4">
    <location>
        <begin position="207"/>
        <end position="469"/>
    </location>
</feature>
<feature type="chain" id="PRO_0000040895" description="Nucleocapsid protein p10-gag" evidence="4">
    <location>
        <begin position="470"/>
        <end position="529"/>
    </location>
</feature>
<feature type="zinc finger region" description="CCHC-type" evidence="5">
    <location>
        <begin position="493"/>
        <end position="510"/>
    </location>
</feature>
<feature type="region of interest" description="Disordered" evidence="6">
    <location>
        <begin position="116"/>
        <end position="211"/>
    </location>
</feature>
<feature type="region of interest" description="Disordered" evidence="6">
    <location>
        <begin position="425"/>
        <end position="529"/>
    </location>
</feature>
<feature type="coiled-coil region" evidence="4">
    <location>
        <begin position="429"/>
        <end position="467"/>
    </location>
</feature>
<feature type="short sequence motif" description="PPXY motif" evidence="4">
    <location>
        <begin position="176"/>
        <end position="179"/>
    </location>
</feature>
<feature type="compositionally biased region" description="Low complexity" evidence="6">
    <location>
        <begin position="157"/>
        <end position="167"/>
    </location>
</feature>
<feature type="compositionally biased region" description="Basic and acidic residues" evidence="6">
    <location>
        <begin position="187"/>
        <end position="196"/>
    </location>
</feature>
<feature type="compositionally biased region" description="Basic and acidic residues" evidence="6">
    <location>
        <begin position="425"/>
        <end position="457"/>
    </location>
</feature>
<feature type="compositionally biased region" description="Basic and acidic residues" evidence="6">
    <location>
        <begin position="477"/>
        <end position="490"/>
    </location>
</feature>
<feature type="compositionally biased region" description="Basic and acidic residues" evidence="6">
    <location>
        <begin position="498"/>
        <end position="510"/>
    </location>
</feature>
<feature type="site" description="Cleavage; by viral protease p14" evidence="1">
    <location>
        <begin position="129"/>
        <end position="130"/>
    </location>
</feature>
<feature type="site" description="Cleavage; by viral protease p14" evidence="1">
    <location>
        <begin position="206"/>
        <end position="207"/>
    </location>
</feature>
<feature type="site" description="Cleavage; by viral protease p14" evidence="1">
    <location>
        <begin position="469"/>
        <end position="470"/>
    </location>
</feature>
<feature type="lipid moiety-binding region" description="N-myristoyl glycine; by host" evidence="1">
    <location>
        <position position="2"/>
    </location>
</feature>
<organism>
    <name type="scientific">Duplan murine leukemia virus</name>
    <dbReference type="NCBI Taxonomy" id="11794"/>
    <lineage>
        <taxon>Viruses</taxon>
        <taxon>Riboviria</taxon>
        <taxon>Pararnavirae</taxon>
        <taxon>Artverviricota</taxon>
        <taxon>Revtraviricetes</taxon>
        <taxon>Ortervirales</taxon>
        <taxon>Retroviridae</taxon>
        <taxon>Orthoretrovirinae</taxon>
        <taxon>Gammaretrovirus</taxon>
        <taxon>Murine leukemia virus</taxon>
    </lineage>
</organism>
<organismHost>
    <name type="scientific">Mus musculus</name>
    <name type="common">Mouse</name>
    <dbReference type="NCBI Taxonomy" id="10090"/>
</organismHost>
<name>GAG_MLVDU</name>
<reference key="1">
    <citation type="journal article" date="1989" name="Nature">
        <title>Severe immunodeficiency disease induced by a defective murine leukaemia virus.</title>
        <authorList>
            <person name="Aziz D.C."/>
            <person name="Hanna Z."/>
            <person name="Jolicoeur P."/>
        </authorList>
    </citation>
    <scope>NUCLEOTIDE SEQUENCE [GENOMIC DNA]</scope>
</reference>
<accession>P23090</accession>
<protein>
    <recommendedName>
        <fullName>Gag polyprotein</fullName>
    </recommendedName>
    <alternativeName>
        <fullName>Core polyprotein</fullName>
    </alternativeName>
    <component>
        <recommendedName>
            <fullName>Matrix protein p15</fullName>
            <shortName>MA</shortName>
        </recommendedName>
    </component>
    <component>
        <recommendedName>
            <fullName>RNA-binding phosphoprotein p12</fullName>
        </recommendedName>
        <alternativeName>
            <fullName>pp12</fullName>
        </alternativeName>
    </component>
    <component>
        <recommendedName>
            <fullName>Capsid protein p30</fullName>
            <shortName>CA</shortName>
        </recommendedName>
    </component>
    <component>
        <recommendedName>
            <fullName>Nucleocapsid protein p10-gag</fullName>
            <shortName>NC-gag</shortName>
        </recommendedName>
    </component>
</protein>
<comment type="function">
    <molecule>Gag polyprotein</molecule>
    <text evidence="2">Plays a role in budding and is processed by the viral protease during virion maturation outside the cell. During budding, it recruits, in a PPXY-dependent or independent manner, Nedd4-like ubiquitin ligases that conjugate ubiquitin molecules to Gag, or to Gag binding host factors. Interaction with HECT ubiquitin ligases probably links the viral protein to the host ESCRT pathway and facilitates release.</text>
</comment>
<comment type="function">
    <molecule>Matrix protein p15</molecule>
    <text evidence="2">Targets Gag and gag-pol polyproteins to the plasma membrane via a multipartite membrane binding signal, that includes its myristoylated N-terminus. Also mediates nuclear localization of the pre-integration complex.</text>
</comment>
<comment type="function">
    <molecule>RNA-binding phosphoprotein p12</molecule>
    <text evidence="2">Constituent of the pre-integration complex (PIC) which tethers the latter to mitotic chromosomes.</text>
</comment>
<comment type="function">
    <molecule>Capsid protein p30</molecule>
    <text evidence="2">Forms the spherical core of the virion that encapsulates the genomic RNA-nucleocapsid complex.</text>
</comment>
<comment type="function">
    <molecule>Nucleocapsid protein p10-gag</molecule>
    <text evidence="2">Involved in the packaging and encapsidation of two copies of the genome. Binds with high affinity to conserved UCUG elements within the packaging signal, located near the 5'-end of the genome. This binding is dependent on genome dimerization.</text>
</comment>
<comment type="subunit">
    <molecule>Gag polyprotein</molecule>
    <text evidence="2">Interacts (via PPXY motif) with host NEDD4.</text>
</comment>
<comment type="subunit">
    <molecule>Capsid protein p30</molecule>
    <text evidence="3">Homohexamer. Further associates as homomultimer (By similarity). The virus core is composed of a lattice formed from hexagonal rings, each containing six capsid monomers (By similarity).</text>
</comment>
<comment type="subcellular location">
    <molecule>Gag polyprotein</molecule>
    <subcellularLocation>
        <location evidence="1">Virion</location>
    </subcellularLocation>
    <subcellularLocation>
        <location evidence="7">Host cell membrane</location>
        <topology evidence="7">Lipid-anchor</topology>
    </subcellularLocation>
</comment>
<comment type="subcellular location">
    <molecule>Matrix protein p15</molecule>
    <subcellularLocation>
        <location evidence="7">Virion</location>
    </subcellularLocation>
</comment>
<comment type="subcellular location">
    <molecule>Capsid protein p30</molecule>
    <subcellularLocation>
        <location evidence="7">Virion</location>
    </subcellularLocation>
</comment>
<comment type="subcellular location">
    <molecule>Nucleocapsid protein p10-gag</molecule>
    <subcellularLocation>
        <location evidence="7">Virion</location>
    </subcellularLocation>
</comment>
<comment type="domain">
    <molecule>Gag polyprotein</molecule>
    <text evidence="2">Late-budding domains (L domains) are short sequence motifs essential for viral particle budding. They recruit proteins of the host ESCRT machinery (Endosomal Sorting Complex Required for Transport) or ESCRT-associated proteins. RNA-binding phosphoprotein p12 contains one L domain: a PPXY motif which interacts with the WW domain 3 of NEDD4 E3 ubiquitin ligase. PPXY motif is essential for virus egress.</text>
</comment>
<comment type="PTM">
    <molecule>Gag polyprotein</molecule>
    <text evidence="2">Specific enzymatic cleavages by the viral protease yield mature proteins. The protease is released by autocatalytic cleavage. The polyprotein is cleaved during and after budding, this process is termed maturation.</text>
</comment>
<evidence type="ECO:0000250" key="1"/>
<evidence type="ECO:0000250" key="2">
    <source>
        <dbReference type="UniProtKB" id="P03332"/>
    </source>
</evidence>
<evidence type="ECO:0000250" key="3">
    <source>
        <dbReference type="UniProtKB" id="P03336"/>
    </source>
</evidence>
<evidence type="ECO:0000255" key="4"/>
<evidence type="ECO:0000255" key="5">
    <source>
        <dbReference type="PROSITE-ProRule" id="PRU00047"/>
    </source>
</evidence>
<evidence type="ECO:0000256" key="6">
    <source>
        <dbReference type="SAM" id="MobiDB-lite"/>
    </source>
</evidence>
<evidence type="ECO:0000305" key="7"/>
<proteinExistence type="inferred from homology"/>
<gene>
    <name type="primary">gag</name>
</gene>
<dbReference type="EMBL" id="X14576">
    <property type="protein sequence ID" value="CAA32715.1"/>
    <property type="molecule type" value="Genomic_DNA"/>
</dbReference>
<dbReference type="PIR" id="S03901">
    <property type="entry name" value="FOMVDU"/>
</dbReference>
<dbReference type="SMR" id="P23090"/>
<dbReference type="GO" id="GO:0020002">
    <property type="term" value="C:host cell plasma membrane"/>
    <property type="evidence" value="ECO:0007669"/>
    <property type="project" value="UniProtKB-SubCell"/>
</dbReference>
<dbReference type="GO" id="GO:0016020">
    <property type="term" value="C:membrane"/>
    <property type="evidence" value="ECO:0007669"/>
    <property type="project" value="UniProtKB-KW"/>
</dbReference>
<dbReference type="GO" id="GO:0019013">
    <property type="term" value="C:viral nucleocapsid"/>
    <property type="evidence" value="ECO:0007669"/>
    <property type="project" value="UniProtKB-KW"/>
</dbReference>
<dbReference type="GO" id="GO:0003723">
    <property type="term" value="F:RNA binding"/>
    <property type="evidence" value="ECO:0007669"/>
    <property type="project" value="UniProtKB-KW"/>
</dbReference>
<dbReference type="GO" id="GO:0039660">
    <property type="term" value="F:structural constituent of virion"/>
    <property type="evidence" value="ECO:0007669"/>
    <property type="project" value="UniProtKB-KW"/>
</dbReference>
<dbReference type="GO" id="GO:0008270">
    <property type="term" value="F:zinc ion binding"/>
    <property type="evidence" value="ECO:0007669"/>
    <property type="project" value="UniProtKB-KW"/>
</dbReference>
<dbReference type="GO" id="GO:0019068">
    <property type="term" value="P:virion assembly"/>
    <property type="evidence" value="ECO:0007669"/>
    <property type="project" value="InterPro"/>
</dbReference>
<dbReference type="Gene3D" id="1.10.150.180">
    <property type="entry name" value="Gamma-retroviral matrix domain"/>
    <property type="match status" value="1"/>
</dbReference>
<dbReference type="Gene3D" id="1.10.375.10">
    <property type="entry name" value="Human Immunodeficiency Virus Type 1 Capsid Protein"/>
    <property type="match status" value="1"/>
</dbReference>
<dbReference type="Gene3D" id="4.10.60.10">
    <property type="entry name" value="Zinc finger, CCHC-type"/>
    <property type="match status" value="1"/>
</dbReference>
<dbReference type="InterPro" id="IPR000840">
    <property type="entry name" value="G_retro_matrix"/>
</dbReference>
<dbReference type="InterPro" id="IPR036946">
    <property type="entry name" value="G_retro_matrix_sf"/>
</dbReference>
<dbReference type="InterPro" id="IPR002079">
    <property type="entry name" value="Gag_p12"/>
</dbReference>
<dbReference type="InterPro" id="IPR003036">
    <property type="entry name" value="Gag_P30"/>
</dbReference>
<dbReference type="InterPro" id="IPR008919">
    <property type="entry name" value="Retrov_capsid_N"/>
</dbReference>
<dbReference type="InterPro" id="IPR050462">
    <property type="entry name" value="Retroviral_Gag-Pol_poly"/>
</dbReference>
<dbReference type="InterPro" id="IPR010999">
    <property type="entry name" value="Retrovr_matrix"/>
</dbReference>
<dbReference type="InterPro" id="IPR001878">
    <property type="entry name" value="Znf_CCHC"/>
</dbReference>
<dbReference type="InterPro" id="IPR036875">
    <property type="entry name" value="Znf_CCHC_sf"/>
</dbReference>
<dbReference type="PANTHER" id="PTHR33166">
    <property type="entry name" value="GAG_P30 DOMAIN-CONTAINING PROTEIN"/>
    <property type="match status" value="1"/>
</dbReference>
<dbReference type="Pfam" id="PF01140">
    <property type="entry name" value="Gag_MA"/>
    <property type="match status" value="1"/>
</dbReference>
<dbReference type="Pfam" id="PF01141">
    <property type="entry name" value="Gag_p12"/>
    <property type="match status" value="1"/>
</dbReference>
<dbReference type="Pfam" id="PF02093">
    <property type="entry name" value="Gag_p30"/>
    <property type="match status" value="1"/>
</dbReference>
<dbReference type="Pfam" id="PF00098">
    <property type="entry name" value="zf-CCHC"/>
    <property type="match status" value="1"/>
</dbReference>
<dbReference type="SMART" id="SM00343">
    <property type="entry name" value="ZnF_C2HC"/>
    <property type="match status" value="1"/>
</dbReference>
<dbReference type="SUPFAM" id="SSF47836">
    <property type="entry name" value="Retroviral matrix proteins"/>
    <property type="match status" value="1"/>
</dbReference>
<dbReference type="SUPFAM" id="SSF47943">
    <property type="entry name" value="Retrovirus capsid protein, N-terminal core domain"/>
    <property type="match status" value="1"/>
</dbReference>
<dbReference type="SUPFAM" id="SSF57756">
    <property type="entry name" value="Retrovirus zinc finger-like domains"/>
    <property type="match status" value="1"/>
</dbReference>
<dbReference type="PROSITE" id="PS50158">
    <property type="entry name" value="ZF_CCHC"/>
    <property type="match status" value="1"/>
</dbReference>
<keyword id="KW-0167">Capsid protein</keyword>
<keyword id="KW-0175">Coiled coil</keyword>
<keyword id="KW-1032">Host cell membrane</keyword>
<keyword id="KW-1043">Host membrane</keyword>
<keyword id="KW-0449">Lipoprotein</keyword>
<keyword id="KW-0472">Membrane</keyword>
<keyword id="KW-0479">Metal-binding</keyword>
<keyword id="KW-0519">Myristate</keyword>
<keyword id="KW-0597">Phosphoprotein</keyword>
<keyword id="KW-0694">RNA-binding</keyword>
<keyword id="KW-0468">Viral matrix protein</keyword>
<keyword id="KW-0543">Viral nucleoprotein</keyword>
<keyword id="KW-0946">Virion</keyword>
<keyword id="KW-0862">Zinc</keyword>
<keyword id="KW-0863">Zinc-finger</keyword>